<dbReference type="EC" id="2.8.4.3" evidence="1"/>
<dbReference type="EMBL" id="AM933173">
    <property type="protein sequence ID" value="CAR36570.1"/>
    <property type="molecule type" value="Genomic_DNA"/>
</dbReference>
<dbReference type="RefSeq" id="WP_001575805.1">
    <property type="nucleotide sequence ID" value="NC_011274.1"/>
</dbReference>
<dbReference type="SMR" id="B5R817"/>
<dbReference type="KEGG" id="seg:SG0674"/>
<dbReference type="HOGENOM" id="CLU_018697_2_0_6"/>
<dbReference type="Proteomes" id="UP000008321">
    <property type="component" value="Chromosome"/>
</dbReference>
<dbReference type="GO" id="GO:0005829">
    <property type="term" value="C:cytosol"/>
    <property type="evidence" value="ECO:0007669"/>
    <property type="project" value="TreeGrafter"/>
</dbReference>
<dbReference type="GO" id="GO:0051539">
    <property type="term" value="F:4 iron, 4 sulfur cluster binding"/>
    <property type="evidence" value="ECO:0007669"/>
    <property type="project" value="UniProtKB-UniRule"/>
</dbReference>
<dbReference type="GO" id="GO:0046872">
    <property type="term" value="F:metal ion binding"/>
    <property type="evidence" value="ECO:0007669"/>
    <property type="project" value="UniProtKB-KW"/>
</dbReference>
<dbReference type="GO" id="GO:0035597">
    <property type="term" value="F:N6-isopentenyladenosine methylthiotransferase activity"/>
    <property type="evidence" value="ECO:0007669"/>
    <property type="project" value="TreeGrafter"/>
</dbReference>
<dbReference type="CDD" id="cd01335">
    <property type="entry name" value="Radical_SAM"/>
    <property type="match status" value="1"/>
</dbReference>
<dbReference type="FunFam" id="3.40.50.12160:FF:000001">
    <property type="entry name" value="tRNA-2-methylthio-N(6)-dimethylallyladenosine synthase"/>
    <property type="match status" value="1"/>
</dbReference>
<dbReference type="FunFam" id="3.80.30.20:FF:000001">
    <property type="entry name" value="tRNA-2-methylthio-N(6)-dimethylallyladenosine synthase 2"/>
    <property type="match status" value="1"/>
</dbReference>
<dbReference type="Gene3D" id="3.40.50.12160">
    <property type="entry name" value="Methylthiotransferase, N-terminal domain"/>
    <property type="match status" value="1"/>
</dbReference>
<dbReference type="Gene3D" id="3.80.30.20">
    <property type="entry name" value="tm_1862 like domain"/>
    <property type="match status" value="1"/>
</dbReference>
<dbReference type="HAMAP" id="MF_01864">
    <property type="entry name" value="tRNA_metthiotr_MiaB"/>
    <property type="match status" value="1"/>
</dbReference>
<dbReference type="InterPro" id="IPR006638">
    <property type="entry name" value="Elp3/MiaA/NifB-like_rSAM"/>
</dbReference>
<dbReference type="InterPro" id="IPR005839">
    <property type="entry name" value="Methylthiotransferase"/>
</dbReference>
<dbReference type="InterPro" id="IPR020612">
    <property type="entry name" value="Methylthiotransferase_CS"/>
</dbReference>
<dbReference type="InterPro" id="IPR013848">
    <property type="entry name" value="Methylthiotransferase_N"/>
</dbReference>
<dbReference type="InterPro" id="IPR038135">
    <property type="entry name" value="Methylthiotransferase_N_sf"/>
</dbReference>
<dbReference type="InterPro" id="IPR006463">
    <property type="entry name" value="MiaB_methiolase"/>
</dbReference>
<dbReference type="InterPro" id="IPR007197">
    <property type="entry name" value="rSAM"/>
</dbReference>
<dbReference type="InterPro" id="IPR023404">
    <property type="entry name" value="rSAM_horseshoe"/>
</dbReference>
<dbReference type="InterPro" id="IPR002792">
    <property type="entry name" value="TRAM_dom"/>
</dbReference>
<dbReference type="NCBIfam" id="TIGR01574">
    <property type="entry name" value="miaB-methiolase"/>
    <property type="match status" value="1"/>
</dbReference>
<dbReference type="NCBIfam" id="TIGR00089">
    <property type="entry name" value="MiaB/RimO family radical SAM methylthiotransferase"/>
    <property type="match status" value="1"/>
</dbReference>
<dbReference type="PANTHER" id="PTHR43020">
    <property type="entry name" value="CDK5 REGULATORY SUBUNIT-ASSOCIATED PROTEIN 1"/>
    <property type="match status" value="1"/>
</dbReference>
<dbReference type="PANTHER" id="PTHR43020:SF2">
    <property type="entry name" value="MITOCHONDRIAL TRNA METHYLTHIOTRANSFERASE CDK5RAP1"/>
    <property type="match status" value="1"/>
</dbReference>
<dbReference type="Pfam" id="PF04055">
    <property type="entry name" value="Radical_SAM"/>
    <property type="match status" value="1"/>
</dbReference>
<dbReference type="Pfam" id="PF01938">
    <property type="entry name" value="TRAM"/>
    <property type="match status" value="1"/>
</dbReference>
<dbReference type="Pfam" id="PF00919">
    <property type="entry name" value="UPF0004"/>
    <property type="match status" value="1"/>
</dbReference>
<dbReference type="SFLD" id="SFLDF00273">
    <property type="entry name" value="(dimethylallyl)adenosine_tRNA"/>
    <property type="match status" value="1"/>
</dbReference>
<dbReference type="SFLD" id="SFLDG01082">
    <property type="entry name" value="B12-binding_domain_containing"/>
    <property type="match status" value="1"/>
</dbReference>
<dbReference type="SFLD" id="SFLDS00029">
    <property type="entry name" value="Radical_SAM"/>
    <property type="match status" value="1"/>
</dbReference>
<dbReference type="SMART" id="SM00729">
    <property type="entry name" value="Elp3"/>
    <property type="match status" value="1"/>
</dbReference>
<dbReference type="SUPFAM" id="SSF102114">
    <property type="entry name" value="Radical SAM enzymes"/>
    <property type="match status" value="1"/>
</dbReference>
<dbReference type="PROSITE" id="PS51449">
    <property type="entry name" value="MTTASE_N"/>
    <property type="match status" value="1"/>
</dbReference>
<dbReference type="PROSITE" id="PS01278">
    <property type="entry name" value="MTTASE_RADICAL"/>
    <property type="match status" value="1"/>
</dbReference>
<dbReference type="PROSITE" id="PS51918">
    <property type="entry name" value="RADICAL_SAM"/>
    <property type="match status" value="1"/>
</dbReference>
<dbReference type="PROSITE" id="PS50926">
    <property type="entry name" value="TRAM"/>
    <property type="match status" value="1"/>
</dbReference>
<name>MIAB_SALG2</name>
<feature type="chain" id="PRO_0000374524" description="tRNA-2-methylthio-N(6)-dimethylallyladenosine synthase">
    <location>
        <begin position="1"/>
        <end position="474"/>
    </location>
</feature>
<feature type="domain" description="MTTase N-terminal" evidence="1">
    <location>
        <begin position="3"/>
        <end position="120"/>
    </location>
</feature>
<feature type="domain" description="Radical SAM core" evidence="2">
    <location>
        <begin position="143"/>
        <end position="375"/>
    </location>
</feature>
<feature type="domain" description="TRAM" evidence="1">
    <location>
        <begin position="378"/>
        <end position="441"/>
    </location>
</feature>
<feature type="binding site" evidence="1">
    <location>
        <position position="12"/>
    </location>
    <ligand>
        <name>[4Fe-4S] cluster</name>
        <dbReference type="ChEBI" id="CHEBI:49883"/>
        <label>1</label>
    </ligand>
</feature>
<feature type="binding site" evidence="1">
    <location>
        <position position="49"/>
    </location>
    <ligand>
        <name>[4Fe-4S] cluster</name>
        <dbReference type="ChEBI" id="CHEBI:49883"/>
        <label>1</label>
    </ligand>
</feature>
<feature type="binding site" evidence="1">
    <location>
        <position position="83"/>
    </location>
    <ligand>
        <name>[4Fe-4S] cluster</name>
        <dbReference type="ChEBI" id="CHEBI:49883"/>
        <label>1</label>
    </ligand>
</feature>
<feature type="binding site" evidence="1">
    <location>
        <position position="157"/>
    </location>
    <ligand>
        <name>[4Fe-4S] cluster</name>
        <dbReference type="ChEBI" id="CHEBI:49883"/>
        <label>2</label>
        <note>4Fe-4S-S-AdoMet</note>
    </ligand>
</feature>
<feature type="binding site" evidence="1">
    <location>
        <position position="161"/>
    </location>
    <ligand>
        <name>[4Fe-4S] cluster</name>
        <dbReference type="ChEBI" id="CHEBI:49883"/>
        <label>2</label>
        <note>4Fe-4S-S-AdoMet</note>
    </ligand>
</feature>
<feature type="binding site" evidence="1">
    <location>
        <position position="164"/>
    </location>
    <ligand>
        <name>[4Fe-4S] cluster</name>
        <dbReference type="ChEBI" id="CHEBI:49883"/>
        <label>2</label>
        <note>4Fe-4S-S-AdoMet</note>
    </ligand>
</feature>
<evidence type="ECO:0000255" key="1">
    <source>
        <dbReference type="HAMAP-Rule" id="MF_01864"/>
    </source>
</evidence>
<evidence type="ECO:0000255" key="2">
    <source>
        <dbReference type="PROSITE-ProRule" id="PRU01266"/>
    </source>
</evidence>
<organism>
    <name type="scientific">Salmonella gallinarum (strain 287/91 / NCTC 13346)</name>
    <dbReference type="NCBI Taxonomy" id="550538"/>
    <lineage>
        <taxon>Bacteria</taxon>
        <taxon>Pseudomonadati</taxon>
        <taxon>Pseudomonadota</taxon>
        <taxon>Gammaproteobacteria</taxon>
        <taxon>Enterobacterales</taxon>
        <taxon>Enterobacteriaceae</taxon>
        <taxon>Salmonella</taxon>
    </lineage>
</organism>
<reference key="1">
    <citation type="journal article" date="2008" name="Genome Res.">
        <title>Comparative genome analysis of Salmonella enteritidis PT4 and Salmonella gallinarum 287/91 provides insights into evolutionary and host adaptation pathways.</title>
        <authorList>
            <person name="Thomson N.R."/>
            <person name="Clayton D.J."/>
            <person name="Windhorst D."/>
            <person name="Vernikos G."/>
            <person name="Davidson S."/>
            <person name="Churcher C."/>
            <person name="Quail M.A."/>
            <person name="Stevens M."/>
            <person name="Jones M.A."/>
            <person name="Watson M."/>
            <person name="Barron A."/>
            <person name="Layton A."/>
            <person name="Pickard D."/>
            <person name="Kingsley R.A."/>
            <person name="Bignell A."/>
            <person name="Clark L."/>
            <person name="Harris B."/>
            <person name="Ormond D."/>
            <person name="Abdellah Z."/>
            <person name="Brooks K."/>
            <person name="Cherevach I."/>
            <person name="Chillingworth T."/>
            <person name="Woodward J."/>
            <person name="Norberczak H."/>
            <person name="Lord A."/>
            <person name="Arrowsmith C."/>
            <person name="Jagels K."/>
            <person name="Moule S."/>
            <person name="Mungall K."/>
            <person name="Saunders M."/>
            <person name="Whitehead S."/>
            <person name="Chabalgoity J.A."/>
            <person name="Maskell D."/>
            <person name="Humphreys T."/>
            <person name="Roberts M."/>
            <person name="Barrow P.A."/>
            <person name="Dougan G."/>
            <person name="Parkhill J."/>
        </authorList>
    </citation>
    <scope>NUCLEOTIDE SEQUENCE [LARGE SCALE GENOMIC DNA]</scope>
    <source>
        <strain>287/91 / NCTC 13346</strain>
    </source>
</reference>
<keyword id="KW-0004">4Fe-4S</keyword>
<keyword id="KW-0963">Cytoplasm</keyword>
<keyword id="KW-0408">Iron</keyword>
<keyword id="KW-0411">Iron-sulfur</keyword>
<keyword id="KW-0479">Metal-binding</keyword>
<keyword id="KW-0949">S-adenosyl-L-methionine</keyword>
<keyword id="KW-0808">Transferase</keyword>
<keyword id="KW-0819">tRNA processing</keyword>
<comment type="function">
    <text evidence="1">Catalyzes the methylthiolation of N6-(dimethylallyl)adenosine (i(6)A), leading to the formation of 2-methylthio-N6-(dimethylallyl)adenosine (ms(2)i(6)A) at position 37 in tRNAs that read codons beginning with uridine.</text>
</comment>
<comment type="catalytic activity">
    <reaction evidence="1">
        <text>N(6)-dimethylallyladenosine(37) in tRNA + (sulfur carrier)-SH + AH2 + 2 S-adenosyl-L-methionine = 2-methylsulfanyl-N(6)-dimethylallyladenosine(37) in tRNA + (sulfur carrier)-H + 5'-deoxyadenosine + L-methionine + A + S-adenosyl-L-homocysteine + 2 H(+)</text>
        <dbReference type="Rhea" id="RHEA:37067"/>
        <dbReference type="Rhea" id="RHEA-COMP:10375"/>
        <dbReference type="Rhea" id="RHEA-COMP:10376"/>
        <dbReference type="Rhea" id="RHEA-COMP:14737"/>
        <dbReference type="Rhea" id="RHEA-COMP:14739"/>
        <dbReference type="ChEBI" id="CHEBI:13193"/>
        <dbReference type="ChEBI" id="CHEBI:15378"/>
        <dbReference type="ChEBI" id="CHEBI:17319"/>
        <dbReference type="ChEBI" id="CHEBI:17499"/>
        <dbReference type="ChEBI" id="CHEBI:29917"/>
        <dbReference type="ChEBI" id="CHEBI:57844"/>
        <dbReference type="ChEBI" id="CHEBI:57856"/>
        <dbReference type="ChEBI" id="CHEBI:59789"/>
        <dbReference type="ChEBI" id="CHEBI:64428"/>
        <dbReference type="ChEBI" id="CHEBI:74415"/>
        <dbReference type="ChEBI" id="CHEBI:74417"/>
        <dbReference type="EC" id="2.8.4.3"/>
    </reaction>
</comment>
<comment type="cofactor">
    <cofactor evidence="1">
        <name>[4Fe-4S] cluster</name>
        <dbReference type="ChEBI" id="CHEBI:49883"/>
    </cofactor>
    <text evidence="1">Binds 2 [4Fe-4S] clusters. One cluster is coordinated with 3 cysteines and an exchangeable S-adenosyl-L-methionine.</text>
</comment>
<comment type="subunit">
    <text evidence="1">Monomer.</text>
</comment>
<comment type="subcellular location">
    <subcellularLocation>
        <location evidence="1">Cytoplasm</location>
    </subcellularLocation>
</comment>
<comment type="similarity">
    <text evidence="1">Belongs to the methylthiotransferase family. MiaB subfamily.</text>
</comment>
<proteinExistence type="inferred from homology"/>
<gene>
    <name evidence="1" type="primary">miaB</name>
    <name type="ordered locus">SG0674</name>
</gene>
<sequence length="474" mass="53729">MTKKLHIKTWGCQMNEYDSSKMADLLDATHGYQLTDVAEEADVLLLNTCSIREKAQEKVFHQLGRWRLLKEKNPDLIIGVGGCVASQEGEHIRQRAHYVDIIFGPQTLHRLPEMINSVRGDRSPVVDISFPEIEKFDRLPEPRAEGPTAFVSIMEGCNKYCTYCVVPYTRGEEVSRPSDDILFEIAQLAAQGVREVNLLGQNVNAWRGENYDGTTGTFADLLRLVAAIDGIDRIRFTTSHPIEFTDDIIEVYRDTPELVSFLHLPVQSGSDRVLNLMGRTHTALEYKAIIRKLRAARPDIQISSDFIVGFPGETNDDFEKTMKLIADVNFDMSYSFIFSARPGTPAADMVDDVPEEEKKQRLYILQERINQQAMAWSRRMLGTTQRILVEGTSRKNIMELSGRTENNRVVNFEGTPEMIGKFVDVEITDVYPNSLRGKVVRTEDEMGLRVAETPESVIARTRKENELGVGFYQP</sequence>
<accession>B5R817</accession>
<protein>
    <recommendedName>
        <fullName evidence="1">tRNA-2-methylthio-N(6)-dimethylallyladenosine synthase</fullName>
        <ecNumber evidence="1">2.8.4.3</ecNumber>
    </recommendedName>
    <alternativeName>
        <fullName evidence="1">(Dimethylallyl)adenosine tRNA methylthiotransferase MiaB</fullName>
    </alternativeName>
    <alternativeName>
        <fullName evidence="1">tRNA-i(6)A37 methylthiotransferase</fullName>
    </alternativeName>
</protein>